<sequence length="914" mass="102480">MDWGLFLHCAALTFTLSRALRSDKCGDTIKILSPGYLTSPGYPQSYHPSQKCEWLIQAPEPYQRIMINFNPHFDLEDRDCKYDYVEVIDGDNAEGRLWGKYCGKIAPPPLVSSGPYLFIKFVSDYETHGAGFSIRYEVFKRGPECSRNFTSSSGMIKSPGFPEKYPNSLECTYIIFAPKMSEIILEFESFELEPDSNTPGGAFCRYDRLEIWDGFPDVGPHIGRYCGQNNPGRVRSSTGILSMVFYTDSAIAKEGFSANYSVSQSSVSEDFQCMEPLGMESGEIHSDQITVSSQYSAIWSSERSRLNYPENGWTPGEDSVREWIQVDLGLLRFVSGIGTQGAISKETKKEYYLKTYRVDVSSNGEDWITLKEGNKPVVFQGNSNPTDVVYRPFPKPVLTRFVRIKPVSWENGVSLRFEVYGCKITDYPCSGMLGMVSGLIPDSQITASTQVDRNWIPENARLITSRSGWALPPTTHPYTNEWLQIDLGEEKIVRGIIVQGGKHRENKVFMKKFKIGYSNNGSDWKMIMDSSKKKIKTFEGNTNYDTPELRTFEPVSTRIIRVYPERATHAGLGLRMELLGCELEAPTAVPTVSEGKPVDECDDDQANCHSGTGGTTVLNTEKPTVIDNTVQPELPPYNLNCGFGWGSHKTLCQWEHDNQVDLKWAILTSKTGPIQDHTGDGNFIYSQADESQKGKVARLLSPIIYSQNSAHCMTFWYHMSGPHVGTLKIKLRYQKPDEYDQVLLSLNGHQANCWQEGRVLLHKSVKLYQVVIEGEIGKGNGGIAVDDINIDNHISQEDCQKSTDVESEIVEEDPESNQTGFTPSYRTDEDYDDISRKPGNVLKTLDPILITIIAMSALGVLLGAICGVVLYCACWHNGMSERNLSALENYNFELVDGVKLKKDKLNTQNSYSEA</sequence>
<name>NRP1_CHICK</name>
<keyword id="KW-0037">Angiogenesis</keyword>
<keyword id="KW-0106">Calcium</keyword>
<keyword id="KW-0130">Cell adhesion</keyword>
<keyword id="KW-1003">Cell membrane</keyword>
<keyword id="KW-0217">Developmental protein</keyword>
<keyword id="KW-0221">Differentiation</keyword>
<keyword id="KW-1015">Disulfide bond</keyword>
<keyword id="KW-0325">Glycoprotein</keyword>
<keyword id="KW-0357">Heparan sulfate</keyword>
<keyword id="KW-0358">Heparin-binding</keyword>
<keyword id="KW-0472">Membrane</keyword>
<keyword id="KW-0479">Metal-binding</keyword>
<keyword id="KW-0496">Mitochondrion</keyword>
<keyword id="KW-0524">Neurogenesis</keyword>
<keyword id="KW-0654">Proteoglycan</keyword>
<keyword id="KW-0675">Receptor</keyword>
<keyword id="KW-1185">Reference proteome</keyword>
<keyword id="KW-0677">Repeat</keyword>
<keyword id="KW-0732">Signal</keyword>
<keyword id="KW-0812">Transmembrane</keyword>
<keyword id="KW-1133">Transmembrane helix</keyword>
<feature type="signal peptide" evidence="3">
    <location>
        <begin position="1"/>
        <end position="18"/>
    </location>
</feature>
<feature type="chain" id="PRO_0000021858" description="Neuropilin-1">
    <location>
        <begin position="19"/>
        <end position="914"/>
    </location>
</feature>
<feature type="topological domain" description="Extracellular" evidence="3">
    <location>
        <begin position="20"/>
        <end position="847"/>
    </location>
</feature>
<feature type="transmembrane region" description="Helical" evidence="3">
    <location>
        <begin position="848"/>
        <end position="870"/>
    </location>
</feature>
<feature type="topological domain" description="Cytoplasmic" evidence="3">
    <location>
        <begin position="871"/>
        <end position="914"/>
    </location>
</feature>
<feature type="domain" description="CUB 1" evidence="4">
    <location>
        <begin position="25"/>
        <end position="139"/>
    </location>
</feature>
<feature type="domain" description="CUB 2" evidence="4">
    <location>
        <begin position="145"/>
        <end position="263"/>
    </location>
</feature>
<feature type="domain" description="F5/8 type C 1" evidence="5">
    <location>
        <begin position="273"/>
        <end position="422"/>
    </location>
</feature>
<feature type="domain" description="F5/8 type C 2" evidence="5">
    <location>
        <begin position="429"/>
        <end position="581"/>
    </location>
</feature>
<feature type="domain" description="MAM" evidence="6">
    <location>
        <begin position="636"/>
        <end position="801"/>
    </location>
</feature>
<feature type="region of interest" description="Disordered" evidence="7">
    <location>
        <begin position="809"/>
        <end position="829"/>
    </location>
</feature>
<feature type="compositionally biased region" description="Polar residues" evidence="7">
    <location>
        <begin position="816"/>
        <end position="825"/>
    </location>
</feature>
<feature type="binding site" evidence="1">
    <location>
        <position position="193"/>
    </location>
    <ligand>
        <name>Ca(2+)</name>
        <dbReference type="ChEBI" id="CHEBI:29108"/>
    </ligand>
</feature>
<feature type="binding site" evidence="1">
    <location>
        <position position="207"/>
    </location>
    <ligand>
        <name>Ca(2+)</name>
        <dbReference type="ChEBI" id="CHEBI:29108"/>
    </ligand>
</feature>
<feature type="binding site" evidence="1">
    <location>
        <position position="248"/>
    </location>
    <ligand>
        <name>Ca(2+)</name>
        <dbReference type="ChEBI" id="CHEBI:29108"/>
    </ligand>
</feature>
<feature type="glycosylation site" description="N-linked (GlcNAc...) asparagine" evidence="3">
    <location>
        <position position="148"/>
    </location>
</feature>
<feature type="glycosylation site" description="N-linked (GlcNAc...) asparagine" evidence="3">
    <location>
        <position position="259"/>
    </location>
</feature>
<feature type="glycosylation site" description="N-linked (GlcNAc...) asparagine" evidence="3">
    <location>
        <position position="520"/>
    </location>
</feature>
<feature type="glycosylation site" description="O-linked (Xyl...) (chondroitin sulfate) serine; alternate" evidence="1">
    <location>
        <position position="610"/>
    </location>
</feature>
<feature type="glycosylation site" description="O-linked (Xyl...) (heparan sulfate) serine; alternate" evidence="1">
    <location>
        <position position="610"/>
    </location>
</feature>
<feature type="glycosylation site" description="N-linked (GlcNAc...) asparagine" evidence="3">
    <location>
        <position position="817"/>
    </location>
</feature>
<feature type="disulfide bond" evidence="1">
    <location>
        <begin position="25"/>
        <end position="52"/>
    </location>
</feature>
<feature type="disulfide bond" evidence="1">
    <location>
        <begin position="80"/>
        <end position="102"/>
    </location>
</feature>
<feature type="disulfide bond" evidence="1">
    <location>
        <begin position="145"/>
        <end position="171"/>
    </location>
</feature>
<feature type="disulfide bond" evidence="1">
    <location>
        <begin position="204"/>
        <end position="226"/>
    </location>
</feature>
<feature type="disulfide bond" evidence="1">
    <location>
        <begin position="273"/>
        <end position="422"/>
    </location>
</feature>
<feature type="disulfide bond" evidence="1">
    <location>
        <begin position="429"/>
        <end position="581"/>
    </location>
</feature>
<protein>
    <recommendedName>
        <fullName>Neuropilin-1</fullName>
    </recommendedName>
    <alternativeName>
        <fullName>A5 protein</fullName>
    </alternativeName>
</protein>
<dbReference type="EMBL" id="D45416">
    <property type="protein sequence ID" value="BAA08256.1"/>
    <property type="molecule type" value="mRNA"/>
</dbReference>
<dbReference type="RefSeq" id="NP_990113.1">
    <property type="nucleotide sequence ID" value="NM_204782.1"/>
</dbReference>
<dbReference type="SMR" id="P79795"/>
<dbReference type="FunCoup" id="P79795">
    <property type="interactions" value="161"/>
</dbReference>
<dbReference type="STRING" id="9031.ENSGALP00000063015"/>
<dbReference type="GlyCosmos" id="P79795">
    <property type="glycosylation" value="5 sites, No reported glycans"/>
</dbReference>
<dbReference type="GlyGen" id="P79795">
    <property type="glycosylation" value="5 sites"/>
</dbReference>
<dbReference type="PaxDb" id="9031-ENSGALP00000011550"/>
<dbReference type="GeneID" id="395560"/>
<dbReference type="KEGG" id="gga:395560"/>
<dbReference type="CTD" id="8829"/>
<dbReference type="VEuPathDB" id="HostDB:geneid_395560"/>
<dbReference type="eggNOG" id="ENOG502QUEH">
    <property type="taxonomic scope" value="Eukaryota"/>
</dbReference>
<dbReference type="InParanoid" id="P79795"/>
<dbReference type="OrthoDB" id="6155811at2759"/>
<dbReference type="PhylomeDB" id="P79795"/>
<dbReference type="PRO" id="PR:P79795"/>
<dbReference type="Proteomes" id="UP000000539">
    <property type="component" value="Unassembled WGS sequence"/>
</dbReference>
<dbReference type="GO" id="GO:0030424">
    <property type="term" value="C:axon"/>
    <property type="evidence" value="ECO:0000314"/>
    <property type="project" value="AgBase"/>
</dbReference>
<dbReference type="GO" id="GO:0043679">
    <property type="term" value="C:axon terminus"/>
    <property type="evidence" value="ECO:0000314"/>
    <property type="project" value="AgBase"/>
</dbReference>
<dbReference type="GO" id="GO:0044295">
    <property type="term" value="C:axonal growth cone"/>
    <property type="evidence" value="ECO:0000314"/>
    <property type="project" value="AgBase"/>
</dbReference>
<dbReference type="GO" id="GO:0070852">
    <property type="term" value="C:cell body fiber"/>
    <property type="evidence" value="ECO:0000314"/>
    <property type="project" value="AgBase"/>
</dbReference>
<dbReference type="GO" id="GO:0005925">
    <property type="term" value="C:focal adhesion"/>
    <property type="evidence" value="ECO:0000318"/>
    <property type="project" value="GO_Central"/>
</dbReference>
<dbReference type="GO" id="GO:0032584">
    <property type="term" value="C:growth cone membrane"/>
    <property type="evidence" value="ECO:0000314"/>
    <property type="project" value="AgBase"/>
</dbReference>
<dbReference type="GO" id="GO:0031966">
    <property type="term" value="C:mitochondrial membrane"/>
    <property type="evidence" value="ECO:0007669"/>
    <property type="project" value="UniProtKB-SubCell"/>
</dbReference>
<dbReference type="GO" id="GO:0005886">
    <property type="term" value="C:plasma membrane"/>
    <property type="evidence" value="ECO:0000314"/>
    <property type="project" value="AgBase"/>
</dbReference>
<dbReference type="GO" id="GO:0008201">
    <property type="term" value="F:heparin binding"/>
    <property type="evidence" value="ECO:0007669"/>
    <property type="project" value="UniProtKB-KW"/>
</dbReference>
<dbReference type="GO" id="GO:0046872">
    <property type="term" value="F:metal ion binding"/>
    <property type="evidence" value="ECO:0007669"/>
    <property type="project" value="UniProtKB-KW"/>
</dbReference>
<dbReference type="GO" id="GO:0017154">
    <property type="term" value="F:semaphorin receptor activity"/>
    <property type="evidence" value="ECO:0000318"/>
    <property type="project" value="GO_Central"/>
</dbReference>
<dbReference type="GO" id="GO:0038085">
    <property type="term" value="F:vascular endothelial growth factor binding"/>
    <property type="evidence" value="ECO:0000318"/>
    <property type="project" value="GO_Central"/>
</dbReference>
<dbReference type="GO" id="GO:0005021">
    <property type="term" value="F:vascular endothelial growth factor receptor activity"/>
    <property type="evidence" value="ECO:0000318"/>
    <property type="project" value="GO_Central"/>
</dbReference>
<dbReference type="GO" id="GO:0007411">
    <property type="term" value="P:axon guidance"/>
    <property type="evidence" value="ECO:0000318"/>
    <property type="project" value="GO_Central"/>
</dbReference>
<dbReference type="GO" id="GO:0007155">
    <property type="term" value="P:cell adhesion"/>
    <property type="evidence" value="ECO:0007669"/>
    <property type="project" value="UniProtKB-KW"/>
</dbReference>
<dbReference type="GO" id="GO:0098743">
    <property type="term" value="P:cell aggregation"/>
    <property type="evidence" value="ECO:0000314"/>
    <property type="project" value="AgBase"/>
</dbReference>
<dbReference type="GO" id="GO:0001755">
    <property type="term" value="P:neural crest cell migration"/>
    <property type="evidence" value="ECO:0000318"/>
    <property type="project" value="GO_Central"/>
</dbReference>
<dbReference type="GO" id="GO:0010595">
    <property type="term" value="P:positive regulation of endothelial cell migration"/>
    <property type="evidence" value="ECO:0000318"/>
    <property type="project" value="GO_Central"/>
</dbReference>
<dbReference type="GO" id="GO:0051491">
    <property type="term" value="P:positive regulation of filopodium assembly"/>
    <property type="evidence" value="ECO:0000315"/>
    <property type="project" value="AgBase"/>
</dbReference>
<dbReference type="GO" id="GO:0030947">
    <property type="term" value="P:regulation of vascular endothelial growth factor receptor signaling pathway"/>
    <property type="evidence" value="ECO:0000318"/>
    <property type="project" value="GO_Central"/>
</dbReference>
<dbReference type="GO" id="GO:0009611">
    <property type="term" value="P:response to wounding"/>
    <property type="evidence" value="ECO:0000318"/>
    <property type="project" value="GO_Central"/>
</dbReference>
<dbReference type="GO" id="GO:0022035">
    <property type="term" value="P:rhombomere cell migration"/>
    <property type="evidence" value="ECO:0000315"/>
    <property type="project" value="AgBase"/>
</dbReference>
<dbReference type="GO" id="GO:0002040">
    <property type="term" value="P:sprouting angiogenesis"/>
    <property type="evidence" value="ECO:0000318"/>
    <property type="project" value="GO_Central"/>
</dbReference>
<dbReference type="GO" id="GO:0048729">
    <property type="term" value="P:tissue morphogenesis"/>
    <property type="evidence" value="ECO:0000315"/>
    <property type="project" value="AgBase"/>
</dbReference>
<dbReference type="GO" id="GO:0048010">
    <property type="term" value="P:vascular endothelial growth factor receptor signaling pathway"/>
    <property type="evidence" value="ECO:0000318"/>
    <property type="project" value="GO_Central"/>
</dbReference>
<dbReference type="GO" id="GO:0001570">
    <property type="term" value="P:vasculogenesis"/>
    <property type="evidence" value="ECO:0000318"/>
    <property type="project" value="GO_Central"/>
</dbReference>
<dbReference type="CDD" id="cd00041">
    <property type="entry name" value="CUB"/>
    <property type="match status" value="2"/>
</dbReference>
<dbReference type="CDD" id="cd00057">
    <property type="entry name" value="FA58C"/>
    <property type="match status" value="2"/>
</dbReference>
<dbReference type="CDD" id="cd06263">
    <property type="entry name" value="MAM"/>
    <property type="match status" value="1"/>
</dbReference>
<dbReference type="FunFam" id="2.60.120.260:FF:000002">
    <property type="entry name" value="Coagulation factor VIII"/>
    <property type="match status" value="1"/>
</dbReference>
<dbReference type="FunFam" id="2.60.120.200:FF:000043">
    <property type="entry name" value="Neuropilin"/>
    <property type="match status" value="1"/>
</dbReference>
<dbReference type="FunFam" id="2.60.120.260:FF:000013">
    <property type="entry name" value="Neuropilin"/>
    <property type="match status" value="1"/>
</dbReference>
<dbReference type="FunFam" id="2.60.120.290:FF:000003">
    <property type="entry name" value="Neuropilin"/>
    <property type="match status" value="1"/>
</dbReference>
<dbReference type="FunFam" id="2.60.120.290:FF:000010">
    <property type="entry name" value="Neuropilin"/>
    <property type="match status" value="1"/>
</dbReference>
<dbReference type="Gene3D" id="2.60.120.200">
    <property type="match status" value="1"/>
</dbReference>
<dbReference type="Gene3D" id="2.60.120.260">
    <property type="entry name" value="Galactose-binding domain-like"/>
    <property type="match status" value="2"/>
</dbReference>
<dbReference type="Gene3D" id="2.60.120.290">
    <property type="entry name" value="Spermadhesin, CUB domain"/>
    <property type="match status" value="2"/>
</dbReference>
<dbReference type="InterPro" id="IPR013320">
    <property type="entry name" value="ConA-like_dom_sf"/>
</dbReference>
<dbReference type="InterPro" id="IPR000859">
    <property type="entry name" value="CUB_dom"/>
</dbReference>
<dbReference type="InterPro" id="IPR000421">
    <property type="entry name" value="FA58C"/>
</dbReference>
<dbReference type="InterPro" id="IPR008979">
    <property type="entry name" value="Galactose-bd-like_sf"/>
</dbReference>
<dbReference type="InterPro" id="IPR000998">
    <property type="entry name" value="MAM_dom"/>
</dbReference>
<dbReference type="InterPro" id="IPR014648">
    <property type="entry name" value="Neuropilin"/>
</dbReference>
<dbReference type="InterPro" id="IPR022579">
    <property type="entry name" value="Neuropilin_C"/>
</dbReference>
<dbReference type="InterPro" id="IPR050633">
    <property type="entry name" value="Neuropilin_MCO_CoagFactor"/>
</dbReference>
<dbReference type="InterPro" id="IPR035914">
    <property type="entry name" value="Sperma_CUB_dom_sf"/>
</dbReference>
<dbReference type="PANTHER" id="PTHR46806">
    <property type="entry name" value="F5/8 TYPE C DOMAIN-CONTAINING PROTEIN"/>
    <property type="match status" value="1"/>
</dbReference>
<dbReference type="PANTHER" id="PTHR46806:SF4">
    <property type="entry name" value="NEUROPILIN-1"/>
    <property type="match status" value="1"/>
</dbReference>
<dbReference type="Pfam" id="PF00431">
    <property type="entry name" value="CUB"/>
    <property type="match status" value="2"/>
</dbReference>
<dbReference type="Pfam" id="PF11980">
    <property type="entry name" value="DUF3481"/>
    <property type="match status" value="1"/>
</dbReference>
<dbReference type="Pfam" id="PF00754">
    <property type="entry name" value="F5_F8_type_C"/>
    <property type="match status" value="2"/>
</dbReference>
<dbReference type="Pfam" id="PF00629">
    <property type="entry name" value="MAM"/>
    <property type="match status" value="1"/>
</dbReference>
<dbReference type="PIRSF" id="PIRSF036960">
    <property type="entry name" value="Neuropilin"/>
    <property type="match status" value="1"/>
</dbReference>
<dbReference type="PRINTS" id="PR00020">
    <property type="entry name" value="MAMDOMAIN"/>
</dbReference>
<dbReference type="SMART" id="SM00042">
    <property type="entry name" value="CUB"/>
    <property type="match status" value="2"/>
</dbReference>
<dbReference type="SMART" id="SM00231">
    <property type="entry name" value="FA58C"/>
    <property type="match status" value="2"/>
</dbReference>
<dbReference type="SMART" id="SM00137">
    <property type="entry name" value="MAM"/>
    <property type="match status" value="1"/>
</dbReference>
<dbReference type="SUPFAM" id="SSF49899">
    <property type="entry name" value="Concanavalin A-like lectins/glucanases"/>
    <property type="match status" value="1"/>
</dbReference>
<dbReference type="SUPFAM" id="SSF49785">
    <property type="entry name" value="Galactose-binding domain-like"/>
    <property type="match status" value="2"/>
</dbReference>
<dbReference type="SUPFAM" id="SSF49854">
    <property type="entry name" value="Spermadhesin, CUB domain"/>
    <property type="match status" value="2"/>
</dbReference>
<dbReference type="PROSITE" id="PS01180">
    <property type="entry name" value="CUB"/>
    <property type="match status" value="2"/>
</dbReference>
<dbReference type="PROSITE" id="PS01285">
    <property type="entry name" value="FA58C_1"/>
    <property type="match status" value="2"/>
</dbReference>
<dbReference type="PROSITE" id="PS01286">
    <property type="entry name" value="FA58C_2"/>
    <property type="match status" value="2"/>
</dbReference>
<dbReference type="PROSITE" id="PS50022">
    <property type="entry name" value="FA58C_3"/>
    <property type="match status" value="2"/>
</dbReference>
<dbReference type="PROSITE" id="PS00740">
    <property type="entry name" value="MAM_1"/>
    <property type="match status" value="1"/>
</dbReference>
<dbReference type="PROSITE" id="PS50060">
    <property type="entry name" value="MAM_2"/>
    <property type="match status" value="1"/>
</dbReference>
<accession>P79795</accession>
<evidence type="ECO:0000250" key="1">
    <source>
        <dbReference type="UniProtKB" id="O14786"/>
    </source>
</evidence>
<evidence type="ECO:0000250" key="2">
    <source>
        <dbReference type="UniProtKB" id="P97333"/>
    </source>
</evidence>
<evidence type="ECO:0000255" key="3"/>
<evidence type="ECO:0000255" key="4">
    <source>
        <dbReference type="PROSITE-ProRule" id="PRU00059"/>
    </source>
</evidence>
<evidence type="ECO:0000255" key="5">
    <source>
        <dbReference type="PROSITE-ProRule" id="PRU00081"/>
    </source>
</evidence>
<evidence type="ECO:0000255" key="6">
    <source>
        <dbReference type="PROSITE-ProRule" id="PRU00128"/>
    </source>
</evidence>
<evidence type="ECO:0000256" key="7">
    <source>
        <dbReference type="SAM" id="MobiDB-lite"/>
    </source>
</evidence>
<evidence type="ECO:0000305" key="8"/>
<proteinExistence type="evidence at transcript level"/>
<comment type="function">
    <text evidence="1 2">Receptor involved in the development of the cardiovascular system, in angiogenesis, in the formation of certain neuronal circuits and in organogenesis outside the nervous system (By similarity). Mediates the chemorepulsant activity of semaphorins. Binding to VEGFA initiates a signaling pathway needed for motor neuron axon guidance and cell body migration, including for the caudal migration of facial motor neurons from rhombomere 4 to rhombomere 6 during embryonic development (By similarity). Regulates mitochondrial iron transport via interaction (By similarity).</text>
</comment>
<comment type="subunit">
    <text evidence="1">Homodimer, and heterodimer.</text>
</comment>
<comment type="subcellular location">
    <subcellularLocation>
        <location evidence="1">Mitochondrion membrane</location>
        <topology evidence="3">Single-pass type I membrane protein</topology>
    </subcellularLocation>
    <subcellularLocation>
        <location evidence="1">Cell membrane</location>
        <topology evidence="3">Single-pass type I membrane protein</topology>
    </subcellularLocation>
</comment>
<comment type="tissue specificity">
    <text>Developing nervous system; optic tectum (layers D and E of SGFS), amacrine cells of retina, neurites of dorsal root ganglia. Also expressed in non-neuronal cells, e.g. blood vessels in the entire embryo.</text>
</comment>
<comment type="similarity">
    <text evidence="8">Belongs to the neuropilin family.</text>
</comment>
<reference key="1">
    <citation type="journal article" date="1995" name="Dev. Biol.">
        <title>Expression of a cell adhesion molecule, neuropilin, in the developing chick nervous system.</title>
        <authorList>
            <person name="Takagi S."/>
            <person name="Kasuya Y."/>
            <person name="Shimizu M."/>
            <person name="Matsuura T."/>
            <person name="Tsuboi M."/>
            <person name="Kawakami A."/>
            <person name="Fujisawa H."/>
        </authorList>
    </citation>
    <scope>NUCLEOTIDE SEQUENCE [MRNA]</scope>
    <source>
        <strain>White leghorn</strain>
        <tissue>Embryonic brain</tissue>
    </source>
</reference>
<organism>
    <name type="scientific">Gallus gallus</name>
    <name type="common">Chicken</name>
    <dbReference type="NCBI Taxonomy" id="9031"/>
    <lineage>
        <taxon>Eukaryota</taxon>
        <taxon>Metazoa</taxon>
        <taxon>Chordata</taxon>
        <taxon>Craniata</taxon>
        <taxon>Vertebrata</taxon>
        <taxon>Euteleostomi</taxon>
        <taxon>Archelosauria</taxon>
        <taxon>Archosauria</taxon>
        <taxon>Dinosauria</taxon>
        <taxon>Saurischia</taxon>
        <taxon>Theropoda</taxon>
        <taxon>Coelurosauria</taxon>
        <taxon>Aves</taxon>
        <taxon>Neognathae</taxon>
        <taxon>Galloanserae</taxon>
        <taxon>Galliformes</taxon>
        <taxon>Phasianidae</taxon>
        <taxon>Phasianinae</taxon>
        <taxon>Gallus</taxon>
    </lineage>
</organism>
<gene>
    <name type="primary">NRP1</name>
    <name type="synonym">NRP</name>
</gene>